<comment type="function">
    <text evidence="1">This protein is one of the early assembly proteins of the 50S ribosomal subunit, although it is not seen to bind rRNA by itself. It is important during the early stages of 50S assembly.</text>
</comment>
<comment type="subunit">
    <text evidence="1">Part of the 50S ribosomal subunit.</text>
</comment>
<comment type="similarity">
    <text evidence="1">Belongs to the universal ribosomal protein uL13 family.</text>
</comment>
<gene>
    <name evidence="1" type="primary">rplM</name>
    <name type="ordered locus">DvMF_0969</name>
</gene>
<organism>
    <name type="scientific">Nitratidesulfovibrio vulgaris (strain DSM 19637 / Miyazaki F)</name>
    <name type="common">Desulfovibrio vulgaris</name>
    <dbReference type="NCBI Taxonomy" id="883"/>
    <lineage>
        <taxon>Bacteria</taxon>
        <taxon>Pseudomonadati</taxon>
        <taxon>Thermodesulfobacteriota</taxon>
        <taxon>Desulfovibrionia</taxon>
        <taxon>Desulfovibrionales</taxon>
        <taxon>Desulfovibrionaceae</taxon>
        <taxon>Nitratidesulfovibrio</taxon>
    </lineage>
</organism>
<sequence length="144" mass="16316">MKTFSPTPENINREWFVVDASDLVLGRLATQITHRLRGKHKPEFAPHMDNGDFIVVVNCEKIKVTGNKLADKKYYRHSGYVGGLHEITLEKLLASHPERVLMNAVRGMLPKNRLGRAMLKKLKVYAGPEHPHAAQNPQPLAIKY</sequence>
<protein>
    <recommendedName>
        <fullName evidence="1">Large ribosomal subunit protein uL13</fullName>
    </recommendedName>
    <alternativeName>
        <fullName evidence="2">50S ribosomal protein L13</fullName>
    </alternativeName>
</protein>
<name>RL13_NITV9</name>
<evidence type="ECO:0000255" key="1">
    <source>
        <dbReference type="HAMAP-Rule" id="MF_01366"/>
    </source>
</evidence>
<evidence type="ECO:0000305" key="2"/>
<dbReference type="EMBL" id="CP001197">
    <property type="protein sequence ID" value="ACL07924.1"/>
    <property type="molecule type" value="Genomic_DNA"/>
</dbReference>
<dbReference type="SMR" id="B8DPL7"/>
<dbReference type="STRING" id="883.DvMF_0969"/>
<dbReference type="KEGG" id="dvm:DvMF_0969"/>
<dbReference type="eggNOG" id="COG0102">
    <property type="taxonomic scope" value="Bacteria"/>
</dbReference>
<dbReference type="HOGENOM" id="CLU_082184_2_2_7"/>
<dbReference type="OrthoDB" id="9801330at2"/>
<dbReference type="GO" id="GO:0022625">
    <property type="term" value="C:cytosolic large ribosomal subunit"/>
    <property type="evidence" value="ECO:0007669"/>
    <property type="project" value="TreeGrafter"/>
</dbReference>
<dbReference type="GO" id="GO:0003729">
    <property type="term" value="F:mRNA binding"/>
    <property type="evidence" value="ECO:0007669"/>
    <property type="project" value="TreeGrafter"/>
</dbReference>
<dbReference type="GO" id="GO:0003735">
    <property type="term" value="F:structural constituent of ribosome"/>
    <property type="evidence" value="ECO:0007669"/>
    <property type="project" value="InterPro"/>
</dbReference>
<dbReference type="GO" id="GO:0017148">
    <property type="term" value="P:negative regulation of translation"/>
    <property type="evidence" value="ECO:0007669"/>
    <property type="project" value="TreeGrafter"/>
</dbReference>
<dbReference type="GO" id="GO:0006412">
    <property type="term" value="P:translation"/>
    <property type="evidence" value="ECO:0007669"/>
    <property type="project" value="UniProtKB-UniRule"/>
</dbReference>
<dbReference type="CDD" id="cd00392">
    <property type="entry name" value="Ribosomal_L13"/>
    <property type="match status" value="1"/>
</dbReference>
<dbReference type="FunFam" id="3.90.1180.10:FF:000001">
    <property type="entry name" value="50S ribosomal protein L13"/>
    <property type="match status" value="1"/>
</dbReference>
<dbReference type="Gene3D" id="3.90.1180.10">
    <property type="entry name" value="Ribosomal protein L13"/>
    <property type="match status" value="1"/>
</dbReference>
<dbReference type="HAMAP" id="MF_01366">
    <property type="entry name" value="Ribosomal_uL13"/>
    <property type="match status" value="1"/>
</dbReference>
<dbReference type="InterPro" id="IPR005822">
    <property type="entry name" value="Ribosomal_uL13"/>
</dbReference>
<dbReference type="InterPro" id="IPR005823">
    <property type="entry name" value="Ribosomal_uL13_bac-type"/>
</dbReference>
<dbReference type="InterPro" id="IPR023563">
    <property type="entry name" value="Ribosomal_uL13_CS"/>
</dbReference>
<dbReference type="InterPro" id="IPR036899">
    <property type="entry name" value="Ribosomal_uL13_sf"/>
</dbReference>
<dbReference type="NCBIfam" id="TIGR01066">
    <property type="entry name" value="rplM_bact"/>
    <property type="match status" value="1"/>
</dbReference>
<dbReference type="PANTHER" id="PTHR11545:SF2">
    <property type="entry name" value="LARGE RIBOSOMAL SUBUNIT PROTEIN UL13M"/>
    <property type="match status" value="1"/>
</dbReference>
<dbReference type="PANTHER" id="PTHR11545">
    <property type="entry name" value="RIBOSOMAL PROTEIN L13"/>
    <property type="match status" value="1"/>
</dbReference>
<dbReference type="Pfam" id="PF00572">
    <property type="entry name" value="Ribosomal_L13"/>
    <property type="match status" value="1"/>
</dbReference>
<dbReference type="PIRSF" id="PIRSF002181">
    <property type="entry name" value="Ribosomal_L13"/>
    <property type="match status" value="1"/>
</dbReference>
<dbReference type="SUPFAM" id="SSF52161">
    <property type="entry name" value="Ribosomal protein L13"/>
    <property type="match status" value="1"/>
</dbReference>
<dbReference type="PROSITE" id="PS00783">
    <property type="entry name" value="RIBOSOMAL_L13"/>
    <property type="match status" value="1"/>
</dbReference>
<keyword id="KW-0687">Ribonucleoprotein</keyword>
<keyword id="KW-0689">Ribosomal protein</keyword>
<accession>B8DPL7</accession>
<reference key="1">
    <citation type="submission" date="2008-10" db="EMBL/GenBank/DDBJ databases">
        <title>Complete sequence of Desulfovibrio vulgaris str. 'Miyazaki F'.</title>
        <authorList>
            <person name="Lucas S."/>
            <person name="Copeland A."/>
            <person name="Lapidus A."/>
            <person name="Glavina del Rio T."/>
            <person name="Dalin E."/>
            <person name="Tice H."/>
            <person name="Bruce D."/>
            <person name="Goodwin L."/>
            <person name="Pitluck S."/>
            <person name="Sims D."/>
            <person name="Brettin T."/>
            <person name="Detter J.C."/>
            <person name="Han C."/>
            <person name="Larimer F."/>
            <person name="Land M."/>
            <person name="Hauser L."/>
            <person name="Kyrpides N."/>
            <person name="Mikhailova N."/>
            <person name="Hazen T.C."/>
            <person name="Richardson P."/>
        </authorList>
    </citation>
    <scope>NUCLEOTIDE SEQUENCE [LARGE SCALE GENOMIC DNA]</scope>
    <source>
        <strain>DSM 19637 / Miyazaki F</strain>
    </source>
</reference>
<proteinExistence type="inferred from homology"/>
<feature type="chain" id="PRO_1000144117" description="Large ribosomal subunit protein uL13">
    <location>
        <begin position="1"/>
        <end position="144"/>
    </location>
</feature>